<reference key="1">
    <citation type="submission" date="2008-08" db="EMBL/GenBank/DDBJ databases">
        <title>Complete sequence of Acidithiobacillus ferrooxidans ATCC 53993.</title>
        <authorList>
            <person name="Lucas S."/>
            <person name="Copeland A."/>
            <person name="Lapidus A."/>
            <person name="Glavina del Rio T."/>
            <person name="Dalin E."/>
            <person name="Tice H."/>
            <person name="Bruce D."/>
            <person name="Goodwin L."/>
            <person name="Pitluck S."/>
            <person name="Sims D."/>
            <person name="Brettin T."/>
            <person name="Detter J.C."/>
            <person name="Han C."/>
            <person name="Kuske C.R."/>
            <person name="Larimer F."/>
            <person name="Land M."/>
            <person name="Hauser L."/>
            <person name="Kyrpides N."/>
            <person name="Lykidis A."/>
            <person name="Borole A.P."/>
        </authorList>
    </citation>
    <scope>NUCLEOTIDE SEQUENCE [LARGE SCALE GENOMIC DNA]</scope>
    <source>
        <strain>ATCC 53993 / BNL-5-31</strain>
    </source>
</reference>
<evidence type="ECO:0000255" key="1">
    <source>
        <dbReference type="HAMAP-Rule" id="MF_00210"/>
    </source>
</evidence>
<feature type="chain" id="PRO_1000118774" description="3-phosphoshikimate 1-carboxyvinyltransferase">
    <location>
        <begin position="1"/>
        <end position="433"/>
    </location>
</feature>
<feature type="active site" description="Proton acceptor" evidence="1">
    <location>
        <position position="314"/>
    </location>
</feature>
<feature type="binding site" evidence="1">
    <location>
        <position position="22"/>
    </location>
    <ligand>
        <name>3-phosphoshikimate</name>
        <dbReference type="ChEBI" id="CHEBI:145989"/>
    </ligand>
</feature>
<feature type="binding site" evidence="1">
    <location>
        <position position="22"/>
    </location>
    <ligand>
        <name>phosphoenolpyruvate</name>
        <dbReference type="ChEBI" id="CHEBI:58702"/>
    </ligand>
</feature>
<feature type="binding site" evidence="1">
    <location>
        <position position="23"/>
    </location>
    <ligand>
        <name>3-phosphoshikimate</name>
        <dbReference type="ChEBI" id="CHEBI:145989"/>
    </ligand>
</feature>
<feature type="binding site" evidence="1">
    <location>
        <position position="27"/>
    </location>
    <ligand>
        <name>3-phosphoshikimate</name>
        <dbReference type="ChEBI" id="CHEBI:145989"/>
    </ligand>
</feature>
<feature type="binding site" evidence="1">
    <location>
        <position position="95"/>
    </location>
    <ligand>
        <name>phosphoenolpyruvate</name>
        <dbReference type="ChEBI" id="CHEBI:58702"/>
    </ligand>
</feature>
<feature type="binding site" evidence="1">
    <location>
        <position position="123"/>
    </location>
    <ligand>
        <name>phosphoenolpyruvate</name>
        <dbReference type="ChEBI" id="CHEBI:58702"/>
    </ligand>
</feature>
<feature type="binding site" evidence="1">
    <location>
        <position position="166"/>
    </location>
    <ligand>
        <name>3-phosphoshikimate</name>
        <dbReference type="ChEBI" id="CHEBI:145989"/>
    </ligand>
</feature>
<feature type="binding site" evidence="1">
    <location>
        <position position="168"/>
    </location>
    <ligand>
        <name>3-phosphoshikimate</name>
        <dbReference type="ChEBI" id="CHEBI:145989"/>
    </ligand>
</feature>
<feature type="binding site" evidence="1">
    <location>
        <position position="168"/>
    </location>
    <ligand>
        <name>phosphoenolpyruvate</name>
        <dbReference type="ChEBI" id="CHEBI:58702"/>
    </ligand>
</feature>
<feature type="binding site" evidence="1">
    <location>
        <position position="314"/>
    </location>
    <ligand>
        <name>3-phosphoshikimate</name>
        <dbReference type="ChEBI" id="CHEBI:145989"/>
    </ligand>
</feature>
<feature type="binding site" evidence="1">
    <location>
        <position position="341"/>
    </location>
    <ligand>
        <name>3-phosphoshikimate</name>
        <dbReference type="ChEBI" id="CHEBI:145989"/>
    </ligand>
</feature>
<feature type="binding site" evidence="1">
    <location>
        <position position="345"/>
    </location>
    <ligand>
        <name>phosphoenolpyruvate</name>
        <dbReference type="ChEBI" id="CHEBI:58702"/>
    </ligand>
</feature>
<feature type="binding site" evidence="1">
    <location>
        <position position="386"/>
    </location>
    <ligand>
        <name>phosphoenolpyruvate</name>
        <dbReference type="ChEBI" id="CHEBI:58702"/>
    </ligand>
</feature>
<organism>
    <name type="scientific">Acidithiobacillus ferrooxidans (strain ATCC 53993 / BNL-5-31)</name>
    <name type="common">Leptospirillum ferrooxidans (ATCC 53993)</name>
    <dbReference type="NCBI Taxonomy" id="380394"/>
    <lineage>
        <taxon>Bacteria</taxon>
        <taxon>Pseudomonadati</taxon>
        <taxon>Pseudomonadota</taxon>
        <taxon>Acidithiobacillia</taxon>
        <taxon>Acidithiobacillales</taxon>
        <taxon>Acidithiobacillaceae</taxon>
        <taxon>Acidithiobacillus</taxon>
    </lineage>
</organism>
<comment type="function">
    <text evidence="1">Catalyzes the transfer of the enolpyruvyl moiety of phosphoenolpyruvate (PEP) to the 5-hydroxyl of shikimate-3-phosphate (S3P) to produce enolpyruvyl shikimate-3-phosphate and inorganic phosphate.</text>
</comment>
<comment type="catalytic activity">
    <reaction evidence="1">
        <text>3-phosphoshikimate + phosphoenolpyruvate = 5-O-(1-carboxyvinyl)-3-phosphoshikimate + phosphate</text>
        <dbReference type="Rhea" id="RHEA:21256"/>
        <dbReference type="ChEBI" id="CHEBI:43474"/>
        <dbReference type="ChEBI" id="CHEBI:57701"/>
        <dbReference type="ChEBI" id="CHEBI:58702"/>
        <dbReference type="ChEBI" id="CHEBI:145989"/>
        <dbReference type="EC" id="2.5.1.19"/>
    </reaction>
    <physiologicalReaction direction="left-to-right" evidence="1">
        <dbReference type="Rhea" id="RHEA:21257"/>
    </physiologicalReaction>
</comment>
<comment type="pathway">
    <text evidence="1">Metabolic intermediate biosynthesis; chorismate biosynthesis; chorismate from D-erythrose 4-phosphate and phosphoenolpyruvate: step 6/7.</text>
</comment>
<comment type="subunit">
    <text evidence="1">Monomer.</text>
</comment>
<comment type="subcellular location">
    <subcellularLocation>
        <location evidence="1">Cytoplasm</location>
    </subcellularLocation>
</comment>
<comment type="similarity">
    <text evidence="1">Belongs to the EPSP synthase family.</text>
</comment>
<name>AROA_ACIF5</name>
<keyword id="KW-0028">Amino-acid biosynthesis</keyword>
<keyword id="KW-0057">Aromatic amino acid biosynthesis</keyword>
<keyword id="KW-0963">Cytoplasm</keyword>
<keyword id="KW-0808">Transferase</keyword>
<dbReference type="EC" id="2.5.1.19" evidence="1"/>
<dbReference type="EMBL" id="CP001132">
    <property type="protein sequence ID" value="ACH83265.1"/>
    <property type="molecule type" value="Genomic_DNA"/>
</dbReference>
<dbReference type="RefSeq" id="WP_012536424.1">
    <property type="nucleotide sequence ID" value="NC_011206.1"/>
</dbReference>
<dbReference type="SMR" id="B5EQ20"/>
<dbReference type="GeneID" id="65280225"/>
<dbReference type="KEGG" id="afe:Lferr_1023"/>
<dbReference type="eggNOG" id="COG0128">
    <property type="taxonomic scope" value="Bacteria"/>
</dbReference>
<dbReference type="HOGENOM" id="CLU_024321_0_1_6"/>
<dbReference type="UniPathway" id="UPA00053">
    <property type="reaction ID" value="UER00089"/>
</dbReference>
<dbReference type="GO" id="GO:0005737">
    <property type="term" value="C:cytoplasm"/>
    <property type="evidence" value="ECO:0007669"/>
    <property type="project" value="UniProtKB-SubCell"/>
</dbReference>
<dbReference type="GO" id="GO:0003866">
    <property type="term" value="F:3-phosphoshikimate 1-carboxyvinyltransferase activity"/>
    <property type="evidence" value="ECO:0007669"/>
    <property type="project" value="UniProtKB-UniRule"/>
</dbReference>
<dbReference type="GO" id="GO:0008652">
    <property type="term" value="P:amino acid biosynthetic process"/>
    <property type="evidence" value="ECO:0007669"/>
    <property type="project" value="UniProtKB-KW"/>
</dbReference>
<dbReference type="GO" id="GO:0009073">
    <property type="term" value="P:aromatic amino acid family biosynthetic process"/>
    <property type="evidence" value="ECO:0007669"/>
    <property type="project" value="UniProtKB-KW"/>
</dbReference>
<dbReference type="GO" id="GO:0009423">
    <property type="term" value="P:chorismate biosynthetic process"/>
    <property type="evidence" value="ECO:0007669"/>
    <property type="project" value="UniProtKB-UniRule"/>
</dbReference>
<dbReference type="CDD" id="cd01556">
    <property type="entry name" value="EPSP_synthase"/>
    <property type="match status" value="1"/>
</dbReference>
<dbReference type="FunFam" id="3.65.10.10:FF:000005">
    <property type="entry name" value="3-phosphoshikimate 1-carboxyvinyltransferase"/>
    <property type="match status" value="1"/>
</dbReference>
<dbReference type="FunFam" id="3.65.10.10:FF:000006">
    <property type="entry name" value="3-phosphoshikimate 1-carboxyvinyltransferase"/>
    <property type="match status" value="1"/>
</dbReference>
<dbReference type="Gene3D" id="3.65.10.10">
    <property type="entry name" value="Enolpyruvate transferase domain"/>
    <property type="match status" value="2"/>
</dbReference>
<dbReference type="HAMAP" id="MF_00210">
    <property type="entry name" value="EPSP_synth"/>
    <property type="match status" value="1"/>
</dbReference>
<dbReference type="InterPro" id="IPR001986">
    <property type="entry name" value="Enolpyruvate_Tfrase_dom"/>
</dbReference>
<dbReference type="InterPro" id="IPR036968">
    <property type="entry name" value="Enolpyruvate_Tfrase_sf"/>
</dbReference>
<dbReference type="InterPro" id="IPR006264">
    <property type="entry name" value="EPSP_synthase"/>
</dbReference>
<dbReference type="InterPro" id="IPR023193">
    <property type="entry name" value="EPSP_synthase_CS"/>
</dbReference>
<dbReference type="InterPro" id="IPR013792">
    <property type="entry name" value="RNA3'P_cycl/enolpyr_Trfase_a/b"/>
</dbReference>
<dbReference type="NCBIfam" id="TIGR01356">
    <property type="entry name" value="aroA"/>
    <property type="match status" value="1"/>
</dbReference>
<dbReference type="PANTHER" id="PTHR21090">
    <property type="entry name" value="AROM/DEHYDROQUINATE SYNTHASE"/>
    <property type="match status" value="1"/>
</dbReference>
<dbReference type="PANTHER" id="PTHR21090:SF5">
    <property type="entry name" value="PENTAFUNCTIONAL AROM POLYPEPTIDE"/>
    <property type="match status" value="1"/>
</dbReference>
<dbReference type="Pfam" id="PF00275">
    <property type="entry name" value="EPSP_synthase"/>
    <property type="match status" value="1"/>
</dbReference>
<dbReference type="PIRSF" id="PIRSF000505">
    <property type="entry name" value="EPSPS"/>
    <property type="match status" value="1"/>
</dbReference>
<dbReference type="SUPFAM" id="SSF55205">
    <property type="entry name" value="EPT/RTPC-like"/>
    <property type="match status" value="1"/>
</dbReference>
<dbReference type="PROSITE" id="PS00104">
    <property type="entry name" value="EPSP_SYNTHASE_1"/>
    <property type="match status" value="1"/>
</dbReference>
<dbReference type="PROSITE" id="PS00885">
    <property type="entry name" value="EPSP_SYNTHASE_2"/>
    <property type="match status" value="1"/>
</dbReference>
<protein>
    <recommendedName>
        <fullName evidence="1">3-phosphoshikimate 1-carboxyvinyltransferase</fullName>
        <ecNumber evidence="1">2.5.1.19</ecNumber>
    </recommendedName>
    <alternativeName>
        <fullName evidence="1">5-enolpyruvylshikimate-3-phosphate synthase</fullName>
        <shortName evidence="1">EPSP synthase</shortName>
        <shortName evidence="1">EPSPS</shortName>
    </alternativeName>
</protein>
<gene>
    <name evidence="1" type="primary">aroA</name>
    <name type="ordered locus">Lferr_1023</name>
</gene>
<proteinExistence type="inferred from homology"/>
<accession>B5EQ20</accession>
<sequence length="433" mass="44810">MTRYLVRPGSRLAGRFPVPGDKSISHRAVILGALAEGVTEVEGLLEGADVLATIAAFRSMGVQMEGPDKGHLRIHGAGLQGLRAPVVPLDCGNSGTAMRLLAGVLAGQPFPSTLVGDASLQKRPMGRILNPLRAMGAEIAAQDGRAPLHIHGRPLHGIDYALPVASAQVKSAVLLAGLYADGQTCVTEPAPTRDHSERMLQGFGQPVERHGPRACLRGGGRLCGQALQVPGDISSAAFFLLGATIAPGSDLTLEGVGINPTRTGIIEILTRMGARIDLTALREVGGEPVADIRVRYAPLQGIAIPPRLVPLAIDEFPALFIAAACAKGQTVITGAEELRVKESDRIAVMAGGLRALGATVEERVDGAIISGSALLGGRVDSHGDHRIAMAFAMAALVAQGDMEILDCANVATSFPSFPALAQQAGLLLEVASA</sequence>